<comment type="function">
    <text evidence="1">Catalyzes the transfer of the diacylglyceryl group from phosphatidylglycerol to the sulfhydryl group of the N-terminal cysteine of a prolipoprotein, the first step in the formation of mature lipoproteins.</text>
</comment>
<comment type="catalytic activity">
    <reaction evidence="1">
        <text>L-cysteinyl-[prolipoprotein] + a 1,2-diacyl-sn-glycero-3-phospho-(1'-sn-glycerol) = an S-1,2-diacyl-sn-glyceryl-L-cysteinyl-[prolipoprotein] + sn-glycerol 1-phosphate + H(+)</text>
        <dbReference type="Rhea" id="RHEA:56712"/>
        <dbReference type="Rhea" id="RHEA-COMP:14679"/>
        <dbReference type="Rhea" id="RHEA-COMP:14680"/>
        <dbReference type="ChEBI" id="CHEBI:15378"/>
        <dbReference type="ChEBI" id="CHEBI:29950"/>
        <dbReference type="ChEBI" id="CHEBI:57685"/>
        <dbReference type="ChEBI" id="CHEBI:64716"/>
        <dbReference type="ChEBI" id="CHEBI:140658"/>
        <dbReference type="EC" id="2.5.1.145"/>
    </reaction>
</comment>
<comment type="pathway">
    <text evidence="1">Protein modification; lipoprotein biosynthesis (diacylglyceryl transfer).</text>
</comment>
<comment type="subcellular location">
    <subcellularLocation>
        <location evidence="1">Cell membrane</location>
        <topology evidence="1">Multi-pass membrane protein</topology>
    </subcellularLocation>
</comment>
<comment type="similarity">
    <text evidence="1">Belongs to the Lgt family.</text>
</comment>
<name>LGT_HALH5</name>
<gene>
    <name evidence="1" type="primary">lgt</name>
    <name type="ordered locus">BH3589</name>
</gene>
<proteinExistence type="inferred from homology"/>
<feature type="chain" id="PRO_0000172552" description="Phosphatidylglycerol--prolipoprotein diacylglyceryl transferase">
    <location>
        <begin position="1"/>
        <end position="289"/>
    </location>
</feature>
<feature type="transmembrane region" description="Helical" evidence="1">
    <location>
        <begin position="18"/>
        <end position="38"/>
    </location>
</feature>
<feature type="transmembrane region" description="Helical" evidence="1">
    <location>
        <begin position="54"/>
        <end position="74"/>
    </location>
</feature>
<feature type="transmembrane region" description="Helical" evidence="1">
    <location>
        <begin position="86"/>
        <end position="106"/>
    </location>
</feature>
<feature type="transmembrane region" description="Helical" evidence="1">
    <location>
        <begin position="116"/>
        <end position="136"/>
    </location>
</feature>
<feature type="transmembrane region" description="Helical" evidence="1">
    <location>
        <begin position="177"/>
        <end position="197"/>
    </location>
</feature>
<feature type="transmembrane region" description="Helical" evidence="1">
    <location>
        <begin position="205"/>
        <end position="225"/>
    </location>
</feature>
<feature type="transmembrane region" description="Helical" evidence="1">
    <location>
        <begin position="236"/>
        <end position="256"/>
    </location>
</feature>
<feature type="binding site" evidence="1">
    <location>
        <position position="137"/>
    </location>
    <ligand>
        <name>a 1,2-diacyl-sn-glycero-3-phospho-(1'-sn-glycerol)</name>
        <dbReference type="ChEBI" id="CHEBI:64716"/>
    </ligand>
</feature>
<evidence type="ECO:0000255" key="1">
    <source>
        <dbReference type="HAMAP-Rule" id="MF_01147"/>
    </source>
</evidence>
<sequence>MEEMIEPLDRVFLQLGPFTIYWYGVLIGLGVIIGYVMASRESVRRGMPKDTFSDFVMYVIPVAIIFARLYYVIFRWEQYADDPIRVFYIWEGGLAIHGALIGGVLTAYILTKKRQLSFWQLMDVAAPSILIGQAIGRWGNFMNQEVYGGPVTREFLEGLMLPEFIINQMYINGTYYHPTFLYESIWNFIGVVVLLLLRRVNLRRGELFFSYLIWYSIGRFFIEGMRLDNLMIGDSLRTAQIVSILLIVGALLLWWYRRAKGLATERYLDPHQPARTNGNKKKTKKKKKK</sequence>
<accession>Q9K6Y5</accession>
<dbReference type="EC" id="2.5.1.145" evidence="1"/>
<dbReference type="EMBL" id="BA000004">
    <property type="protein sequence ID" value="BAB07308.1"/>
    <property type="molecule type" value="Genomic_DNA"/>
</dbReference>
<dbReference type="PIR" id="E84098">
    <property type="entry name" value="E84098"/>
</dbReference>
<dbReference type="RefSeq" id="WP_010899717.1">
    <property type="nucleotide sequence ID" value="NC_002570.2"/>
</dbReference>
<dbReference type="SMR" id="Q9K6Y5"/>
<dbReference type="STRING" id="272558.gene:10729502"/>
<dbReference type="KEGG" id="bha:BH3589"/>
<dbReference type="eggNOG" id="COG0682">
    <property type="taxonomic scope" value="Bacteria"/>
</dbReference>
<dbReference type="HOGENOM" id="CLU_013386_0_1_9"/>
<dbReference type="OrthoDB" id="871140at2"/>
<dbReference type="UniPathway" id="UPA00664"/>
<dbReference type="Proteomes" id="UP000001258">
    <property type="component" value="Chromosome"/>
</dbReference>
<dbReference type="GO" id="GO:0005886">
    <property type="term" value="C:plasma membrane"/>
    <property type="evidence" value="ECO:0007669"/>
    <property type="project" value="UniProtKB-SubCell"/>
</dbReference>
<dbReference type="GO" id="GO:0008961">
    <property type="term" value="F:phosphatidylglycerol-prolipoprotein diacylglyceryl transferase activity"/>
    <property type="evidence" value="ECO:0007669"/>
    <property type="project" value="UniProtKB-UniRule"/>
</dbReference>
<dbReference type="GO" id="GO:0042158">
    <property type="term" value="P:lipoprotein biosynthetic process"/>
    <property type="evidence" value="ECO:0007669"/>
    <property type="project" value="UniProtKB-UniRule"/>
</dbReference>
<dbReference type="HAMAP" id="MF_01147">
    <property type="entry name" value="Lgt"/>
    <property type="match status" value="1"/>
</dbReference>
<dbReference type="InterPro" id="IPR001640">
    <property type="entry name" value="Lgt"/>
</dbReference>
<dbReference type="NCBIfam" id="TIGR00544">
    <property type="entry name" value="lgt"/>
    <property type="match status" value="1"/>
</dbReference>
<dbReference type="PANTHER" id="PTHR30589:SF0">
    <property type="entry name" value="PHOSPHATIDYLGLYCEROL--PROLIPOPROTEIN DIACYLGLYCERYL TRANSFERASE"/>
    <property type="match status" value="1"/>
</dbReference>
<dbReference type="PANTHER" id="PTHR30589">
    <property type="entry name" value="PROLIPOPROTEIN DIACYLGLYCERYL TRANSFERASE"/>
    <property type="match status" value="1"/>
</dbReference>
<dbReference type="Pfam" id="PF01790">
    <property type="entry name" value="LGT"/>
    <property type="match status" value="1"/>
</dbReference>
<dbReference type="PROSITE" id="PS01311">
    <property type="entry name" value="LGT"/>
    <property type="match status" value="1"/>
</dbReference>
<protein>
    <recommendedName>
        <fullName evidence="1">Phosphatidylglycerol--prolipoprotein diacylglyceryl transferase</fullName>
        <ecNumber evidence="1">2.5.1.145</ecNumber>
    </recommendedName>
</protein>
<reference key="1">
    <citation type="journal article" date="2000" name="Nucleic Acids Res.">
        <title>Complete genome sequence of the alkaliphilic bacterium Bacillus halodurans and genomic sequence comparison with Bacillus subtilis.</title>
        <authorList>
            <person name="Takami H."/>
            <person name="Nakasone K."/>
            <person name="Takaki Y."/>
            <person name="Maeno G."/>
            <person name="Sasaki R."/>
            <person name="Masui N."/>
            <person name="Fuji F."/>
            <person name="Hirama C."/>
            <person name="Nakamura Y."/>
            <person name="Ogasawara N."/>
            <person name="Kuhara S."/>
            <person name="Horikoshi K."/>
        </authorList>
    </citation>
    <scope>NUCLEOTIDE SEQUENCE [LARGE SCALE GENOMIC DNA]</scope>
    <source>
        <strain>ATCC BAA-125 / DSM 18197 / FERM 7344 / JCM 9153 / C-125</strain>
    </source>
</reference>
<organism>
    <name type="scientific">Halalkalibacterium halodurans (strain ATCC BAA-125 / DSM 18197 / FERM 7344 / JCM 9153 / C-125)</name>
    <name type="common">Bacillus halodurans</name>
    <dbReference type="NCBI Taxonomy" id="272558"/>
    <lineage>
        <taxon>Bacteria</taxon>
        <taxon>Bacillati</taxon>
        <taxon>Bacillota</taxon>
        <taxon>Bacilli</taxon>
        <taxon>Bacillales</taxon>
        <taxon>Bacillaceae</taxon>
        <taxon>Halalkalibacterium (ex Joshi et al. 2022)</taxon>
    </lineage>
</organism>
<keyword id="KW-1003">Cell membrane</keyword>
<keyword id="KW-0472">Membrane</keyword>
<keyword id="KW-1185">Reference proteome</keyword>
<keyword id="KW-0808">Transferase</keyword>
<keyword id="KW-0812">Transmembrane</keyword>
<keyword id="KW-1133">Transmembrane helix</keyword>